<dbReference type="EC" id="1.-.-.-" evidence="8"/>
<dbReference type="EMBL" id="HF679031">
    <property type="protein sequence ID" value="CCT73266.1"/>
    <property type="molecule type" value="Genomic_DNA"/>
</dbReference>
<dbReference type="SMR" id="S0EE84"/>
<dbReference type="STRING" id="1279085.S0EE84"/>
<dbReference type="GlyCosmos" id="S0EE84">
    <property type="glycosylation" value="2 sites, No reported glycans"/>
</dbReference>
<dbReference type="EnsemblFungi" id="CCT73266">
    <property type="protein sequence ID" value="CCT73266"/>
    <property type="gene ID" value="FFUJ_10051"/>
</dbReference>
<dbReference type="VEuPathDB" id="FungiDB:FFUJ_10051"/>
<dbReference type="HOGENOM" id="CLU_001570_4_1_1"/>
<dbReference type="BioCyc" id="MetaCyc:MONOMER-19358"/>
<dbReference type="Proteomes" id="UP000016800">
    <property type="component" value="Chromosome 9"/>
</dbReference>
<dbReference type="GO" id="GO:0016020">
    <property type="term" value="C:membrane"/>
    <property type="evidence" value="ECO:0007669"/>
    <property type="project" value="UniProtKB-SubCell"/>
</dbReference>
<dbReference type="GO" id="GO:0020037">
    <property type="term" value="F:heme binding"/>
    <property type="evidence" value="ECO:0007669"/>
    <property type="project" value="InterPro"/>
</dbReference>
<dbReference type="GO" id="GO:0005506">
    <property type="term" value="F:iron ion binding"/>
    <property type="evidence" value="ECO:0007669"/>
    <property type="project" value="InterPro"/>
</dbReference>
<dbReference type="GO" id="GO:0004497">
    <property type="term" value="F:monooxygenase activity"/>
    <property type="evidence" value="ECO:0007669"/>
    <property type="project" value="UniProtKB-KW"/>
</dbReference>
<dbReference type="GO" id="GO:0016705">
    <property type="term" value="F:oxidoreductase activity, acting on paired donors, with incorporation or reduction of molecular oxygen"/>
    <property type="evidence" value="ECO:0007669"/>
    <property type="project" value="InterPro"/>
</dbReference>
<dbReference type="GO" id="GO:0044550">
    <property type="term" value="P:secondary metabolite biosynthetic process"/>
    <property type="evidence" value="ECO:0007669"/>
    <property type="project" value="UniProtKB-ARBA"/>
</dbReference>
<dbReference type="Gene3D" id="1.10.630.10">
    <property type="entry name" value="Cytochrome P450"/>
    <property type="match status" value="1"/>
</dbReference>
<dbReference type="InterPro" id="IPR001128">
    <property type="entry name" value="Cyt_P450"/>
</dbReference>
<dbReference type="InterPro" id="IPR017972">
    <property type="entry name" value="Cyt_P450_CS"/>
</dbReference>
<dbReference type="InterPro" id="IPR002401">
    <property type="entry name" value="Cyt_P450_E_grp-I"/>
</dbReference>
<dbReference type="InterPro" id="IPR036396">
    <property type="entry name" value="Cyt_P450_sf"/>
</dbReference>
<dbReference type="InterPro" id="IPR050121">
    <property type="entry name" value="Cytochrome_P450_monoxygenase"/>
</dbReference>
<dbReference type="PANTHER" id="PTHR24305">
    <property type="entry name" value="CYTOCHROME P450"/>
    <property type="match status" value="1"/>
</dbReference>
<dbReference type="PANTHER" id="PTHR24305:SF235">
    <property type="entry name" value="CYTOCHROME P450 MONOOXYGENASE APDB-RELATED"/>
    <property type="match status" value="1"/>
</dbReference>
<dbReference type="Pfam" id="PF00067">
    <property type="entry name" value="p450"/>
    <property type="match status" value="1"/>
</dbReference>
<dbReference type="PRINTS" id="PR00463">
    <property type="entry name" value="EP450I"/>
</dbReference>
<dbReference type="PRINTS" id="PR00385">
    <property type="entry name" value="P450"/>
</dbReference>
<dbReference type="SUPFAM" id="SSF48264">
    <property type="entry name" value="Cytochrome P450"/>
    <property type="match status" value="1"/>
</dbReference>
<dbReference type="PROSITE" id="PS00086">
    <property type="entry name" value="CYTOCHROME_P450"/>
    <property type="match status" value="1"/>
</dbReference>
<gene>
    <name evidence="6" type="primary">FUS8</name>
    <name type="ORF">FFUJ_10051</name>
</gene>
<organism>
    <name type="scientific">Gibberella fujikuroi (strain CBS 195.34 / IMI 58289 / NRRL A-6831)</name>
    <name type="common">Bakanae and foot rot disease fungus</name>
    <name type="synonym">Fusarium fujikuroi</name>
    <dbReference type="NCBI Taxonomy" id="1279085"/>
    <lineage>
        <taxon>Eukaryota</taxon>
        <taxon>Fungi</taxon>
        <taxon>Dikarya</taxon>
        <taxon>Ascomycota</taxon>
        <taxon>Pezizomycotina</taxon>
        <taxon>Sordariomycetes</taxon>
        <taxon>Hypocreomycetidae</taxon>
        <taxon>Hypocreales</taxon>
        <taxon>Nectriaceae</taxon>
        <taxon>Fusarium</taxon>
        <taxon>Fusarium fujikuroi species complex</taxon>
    </lineage>
</organism>
<evidence type="ECO:0000250" key="1">
    <source>
        <dbReference type="UniProtKB" id="P04798"/>
    </source>
</evidence>
<evidence type="ECO:0000255" key="2"/>
<evidence type="ECO:0000255" key="3">
    <source>
        <dbReference type="PROSITE-ProRule" id="PRU00498"/>
    </source>
</evidence>
<evidence type="ECO:0000269" key="4">
    <source>
    </source>
</evidence>
<evidence type="ECO:0000269" key="5">
    <source>
    </source>
</evidence>
<evidence type="ECO:0000303" key="6">
    <source>
    </source>
</evidence>
<evidence type="ECO:0000305" key="7"/>
<evidence type="ECO:0000305" key="8">
    <source>
    </source>
</evidence>
<accession>S0EE84</accession>
<protein>
    <recommendedName>
        <fullName evidence="6">Cytochrome P450 monooxygenase FUS8</fullName>
        <ecNumber evidence="8">1.-.-.-</ecNumber>
    </recommendedName>
    <alternativeName>
        <fullName evidence="6">Fusarin biosynthesis protein 8</fullName>
    </alternativeName>
</protein>
<keyword id="KW-0325">Glycoprotein</keyword>
<keyword id="KW-0349">Heme</keyword>
<keyword id="KW-0408">Iron</keyword>
<keyword id="KW-0472">Membrane</keyword>
<keyword id="KW-0479">Metal-binding</keyword>
<keyword id="KW-0503">Monooxygenase</keyword>
<keyword id="KW-0560">Oxidoreductase</keyword>
<keyword id="KW-1185">Reference proteome</keyword>
<keyword id="KW-0812">Transmembrane</keyword>
<keyword id="KW-1133">Transmembrane helix</keyword>
<comment type="function">
    <text evidence="5">Cytochrome P450 monooxygenase; part of the gene cluster that mediates the biosynthesis of the mycotoxin fusarin C (PubMed:23932525). Within the cluster, FUS1, FUS2, FUS8 and FUS9 are sufficient for fusarin production (PubMed:23932525). The roles of the other FUS members are yet undetermined (PubMed:23932525). The fusarin C synthetase FUS1 is responsible for the condensation of one acetyl-coenzyme A (CoA) unit with six malonyl-CoA units and the amide linkage of the arising heptaketide and homoserine, subsequently releasing the first intermediate, prefusarin, as an alcohol with an open ring structure (PubMed:23932525). The cytochrome P450 monooxygenase FUS8 participates in multiple oxidation processes at carbon C-20 and is able to use the FUS1 product as substrate, resulting in formation of 20-hydroxy-prefusarin (PubMed:23932525). This reaction seems to be essential before the 2-pyrrolidone ring closure can be catalyzed by FUS2, generating 20-hydroxy-fusarin (PubMed:23932525). FUS8 is able to further oxidizes carbon C-20 after ring closure, resulting in the formation of carboxy-fusarin C (PubMed:23932525). As the last step, FUS9 methylates the hydroxyl group at C-21 to generate fusarin C (PubMed:23932525). Fusarin C can then rearrange to epi-fusarin C, the (z)-isomers, and fusarin A and fusarin D (PubMed:23932525).</text>
</comment>
<comment type="cofactor">
    <cofactor evidence="1">
        <name>heme</name>
        <dbReference type="ChEBI" id="CHEBI:30413"/>
    </cofactor>
</comment>
<comment type="pathway">
    <text evidence="5">Mycotoxin biosynthesis.</text>
</comment>
<comment type="subcellular location">
    <subcellularLocation>
        <location evidence="2">Membrane</location>
        <topology evidence="2">Single-pass membrane protein</topology>
    </subcellularLocation>
</comment>
<comment type="induction">
    <text evidence="4 5">Expressed under high amounts of nitrogen via regulation by GLN1 (PubMed:23932525). Moreover, components of the fungal-specific velvet complex VEL1, VEL2 and LAE1 act also as positive regulators of expression (PubMed:20572938, PubMed:23932525). Finally, expression is induced under acidic conditions in a PACC-independent manner (PubMed:23932525).</text>
</comment>
<comment type="disruption phenotype">
    <text evidence="5">Accumulates 20-hydroxy-fusarin (PubMed:23932525).</text>
</comment>
<comment type="similarity">
    <text evidence="7">Belongs to the cytochrome P450 family.</text>
</comment>
<feature type="chain" id="PRO_0000437363" description="Cytochrome P450 monooxygenase FUS8">
    <location>
        <begin position="1"/>
        <end position="514"/>
    </location>
</feature>
<feature type="transmembrane region" description="Helical" evidence="2">
    <location>
        <begin position="24"/>
        <end position="44"/>
    </location>
</feature>
<feature type="binding site" description="axial binding residue" evidence="1">
    <location>
        <position position="460"/>
    </location>
    <ligand>
        <name>heme</name>
        <dbReference type="ChEBI" id="CHEBI:30413"/>
    </ligand>
    <ligandPart>
        <name>Fe</name>
        <dbReference type="ChEBI" id="CHEBI:18248"/>
    </ligandPart>
</feature>
<feature type="glycosylation site" description="N-linked (GlcNAc...) asparagine" evidence="3">
    <location>
        <position position="225"/>
    </location>
</feature>
<feature type="glycosylation site" description="N-linked (GlcNAc...) asparagine" evidence="3">
    <location>
        <position position="443"/>
    </location>
</feature>
<name>FUS8_GIBF5</name>
<reference key="1">
    <citation type="journal article" date="2013" name="PLoS Pathog.">
        <title>Deciphering the cryptic genome: genome-wide analyses of the rice pathogen Fusarium fujikuroi reveal complex regulation of secondary metabolism and novel metabolites.</title>
        <authorList>
            <person name="Wiemann P."/>
            <person name="Sieber C.M.K."/>
            <person name="von Bargen K.W."/>
            <person name="Studt L."/>
            <person name="Niehaus E.-M."/>
            <person name="Espino J.J."/>
            <person name="Huss K."/>
            <person name="Michielse C.B."/>
            <person name="Albermann S."/>
            <person name="Wagner D."/>
            <person name="Bergner S.V."/>
            <person name="Connolly L.R."/>
            <person name="Fischer A."/>
            <person name="Reuter G."/>
            <person name="Kleigrewe K."/>
            <person name="Bald T."/>
            <person name="Wingfield B.D."/>
            <person name="Ophir R."/>
            <person name="Freeman S."/>
            <person name="Hippler M."/>
            <person name="Smith K.M."/>
            <person name="Brown D.W."/>
            <person name="Proctor R.H."/>
            <person name="Muensterkoetter M."/>
            <person name="Freitag M."/>
            <person name="Humpf H.-U."/>
            <person name="Gueldener U."/>
            <person name="Tudzynski B."/>
        </authorList>
    </citation>
    <scope>NUCLEOTIDE SEQUENCE [LARGE SCALE GENOMIC DNA]</scope>
    <source>
        <strain>CBS 195.34 / IMI 58289 / NRRL A-6831</strain>
    </source>
</reference>
<reference key="2">
    <citation type="journal article" date="2010" name="Mol. Microbiol.">
        <title>FfVel1 and FfLae1, components of a velvet-like complex in Fusarium fujikuroi, affect differentiation, secondary metabolism and virulence.</title>
        <authorList>
            <person name="Wiemann P."/>
            <person name="Brown D.W."/>
            <person name="Kleigrewe K."/>
            <person name="Bok J.W."/>
            <person name="Keller N.P."/>
            <person name="Humpf H.U."/>
            <person name="Tudzynski B."/>
        </authorList>
    </citation>
    <scope>INDUCTION</scope>
</reference>
<reference key="3">
    <citation type="journal article" date="2013" name="Chem. Biol.">
        <title>Genetic manipulation of the Fusarium fujikuroi fusarin gene cluster yields insight into the complex regulation and fusarin biosynthetic pathway.</title>
        <authorList>
            <person name="Niehaus E.M."/>
            <person name="Kleigrewe K."/>
            <person name="Wiemann P."/>
            <person name="Studt L."/>
            <person name="Sieber C.M."/>
            <person name="Connolly L.R."/>
            <person name="Freitag M."/>
            <person name="Gueldener U."/>
            <person name="Tudzynski B."/>
            <person name="Humpf H.U."/>
        </authorList>
    </citation>
    <scope>FUNCTION</scope>
    <scope>INDUCTION</scope>
    <scope>DISRUPTION PHENOTYPE</scope>
    <scope>CATALYTIC ACTIVITY</scope>
</reference>
<proteinExistence type="evidence at protein level"/>
<sequence>MDSKPLEYLLGLNSDGSVKKVSEVFENLTVTNTVCAFIALFIIVPRVFDFLRNLFSPVISIPGPLINKFSPWPLEIATFKGKSHRFARALHRKYGPIVVLAPGMISIGDSQEIKRIIQSEDWAKSEAIYGNFRQDFHRPTLLAFTEKKAYSRRKRMLSSMFGIRYIRSLEPLMKSCVDAGVAHLNKLCDNPSKSTVINLQHFIHGLAIDTIGVTTFGGSFHVVENGSHPLPSRLKAGMKISAVMQLIGWIKYIPFLPKRDPYIEKFTFDIVDKRRKEAGAVKYQDLLQHLVDVCDDSPGSEFRTSDVQDESVILLAAGSETTANAELFTVIQLLKHPEVMKKLIAEVDKWYPPSEPDRVTECAYSQTGMTYLQACIDETMRLIPGQATGSPRETSKQESLLGYKIPRGTTVFPNTQEAHLDGSIWEQPEKYIPERWLEIYSQNQTSAMPYWPFSAGSRICVGKNFAFQEMHISLTTLLRKFTFEYVPGQDETTVFRIAQQLETDSYKVRVKKRF</sequence>